<accession>P0C8D2</accession>
<comment type="subcellular location">
    <subcellularLocation>
        <location evidence="1">Secreted</location>
    </subcellularLocation>
</comment>
<comment type="tissue specificity">
    <text evidence="3">Expressed by the venom gland.</text>
</comment>
<comment type="mass spectrometry" mass="8011.73" method="Electrospray" evidence="1"/>
<comment type="similarity">
    <text evidence="2">Belongs to the scolopendra toxin 8 family.</text>
</comment>
<organism>
    <name type="scientific">Scolopendra viridicornis nigra</name>
    <name type="common">Brazilian giant centipede</name>
    <dbReference type="NCBI Taxonomy" id="486497"/>
    <lineage>
        <taxon>Eukaryota</taxon>
        <taxon>Metazoa</taxon>
        <taxon>Ecdysozoa</taxon>
        <taxon>Arthropoda</taxon>
        <taxon>Myriapoda</taxon>
        <taxon>Chilopoda</taxon>
        <taxon>Pleurostigmophora</taxon>
        <taxon>Scolopendromorpha</taxon>
        <taxon>Scolopendridae</taxon>
        <taxon>Scolopendra</taxon>
    </lineage>
</organism>
<dbReference type="GO" id="GO:0005576">
    <property type="term" value="C:extracellular region"/>
    <property type="evidence" value="ECO:0007669"/>
    <property type="project" value="UniProtKB-SubCell"/>
</dbReference>
<dbReference type="GO" id="GO:0090729">
    <property type="term" value="F:toxin activity"/>
    <property type="evidence" value="ECO:0007669"/>
    <property type="project" value="UniProtKB-KW"/>
</dbReference>
<sequence length="29" mass="3290">LKVPDLPLPESYKKALELAKDDLAREIXI</sequence>
<feature type="chain" id="PRO_0000352868" description="Scolopendra 8011.73 Da toxin">
    <location>
        <begin position="1"/>
        <end position="29" status="greater than"/>
    </location>
</feature>
<feature type="non-terminal residue">
    <location>
        <position position="29"/>
    </location>
</feature>
<name>STX8B_SCOVN</name>
<proteinExistence type="evidence at protein level"/>
<keyword id="KW-0903">Direct protein sequencing</keyword>
<keyword id="KW-0528">Neurotoxin</keyword>
<keyword id="KW-0964">Secreted</keyword>
<keyword id="KW-0800">Toxin</keyword>
<protein>
    <recommendedName>
        <fullName>Scolopendra 8011.73 Da toxin</fullName>
    </recommendedName>
</protein>
<reference key="1">
    <citation type="journal article" date="2007" name="Toxicon">
        <title>Venomic analyses of Scolopendra viridicornis nigra and Scolopendra angulata (Centipede, Scolopendromorpha): shedding light on venoms from a neglected group.</title>
        <authorList>
            <person name="Rates B."/>
            <person name="Bemquerer M.P."/>
            <person name="Richardson M."/>
            <person name="Borges M.H."/>
            <person name="Morales R.A.V."/>
            <person name="De Lima M.E."/>
            <person name="Pimenta A.M.C."/>
        </authorList>
    </citation>
    <scope>PROTEIN SEQUENCE</scope>
    <scope>MASS SPECTROMETRY</scope>
    <scope>SUBCELLULAR LOCATION</scope>
    <source>
        <tissue>Venom</tissue>
    </source>
</reference>
<evidence type="ECO:0000269" key="1">
    <source>
    </source>
</evidence>
<evidence type="ECO:0000305" key="2"/>
<evidence type="ECO:0000305" key="3">
    <source>
    </source>
</evidence>